<organism>
    <name type="scientific">Desulfitobacterium hafniense (strain Y51)</name>
    <dbReference type="NCBI Taxonomy" id="138119"/>
    <lineage>
        <taxon>Bacteria</taxon>
        <taxon>Bacillati</taxon>
        <taxon>Bacillota</taxon>
        <taxon>Clostridia</taxon>
        <taxon>Eubacteriales</taxon>
        <taxon>Desulfitobacteriaceae</taxon>
        <taxon>Desulfitobacterium</taxon>
    </lineage>
</organism>
<protein>
    <recommendedName>
        <fullName evidence="1">Segregation and condensation protein A</fullName>
    </recommendedName>
</protein>
<reference key="1">
    <citation type="journal article" date="2006" name="J. Bacteriol.">
        <title>Complete genome sequence of the dehalorespiring bacterium Desulfitobacterium hafniense Y51 and comparison with Dehalococcoides ethenogenes 195.</title>
        <authorList>
            <person name="Nonaka H."/>
            <person name="Keresztes G."/>
            <person name="Shinoda Y."/>
            <person name="Ikenaga Y."/>
            <person name="Abe M."/>
            <person name="Naito K."/>
            <person name="Inatomi K."/>
            <person name="Furukawa K."/>
            <person name="Inui M."/>
            <person name="Yukawa H."/>
        </authorList>
    </citation>
    <scope>NUCLEOTIDE SEQUENCE [LARGE SCALE GENOMIC DNA]</scope>
    <source>
        <strain>Y51</strain>
    </source>
</reference>
<proteinExistence type="inferred from homology"/>
<evidence type="ECO:0000255" key="1">
    <source>
        <dbReference type="HAMAP-Rule" id="MF_01805"/>
    </source>
</evidence>
<dbReference type="EMBL" id="AP008230">
    <property type="protein sequence ID" value="BAE84077.1"/>
    <property type="molecule type" value="Genomic_DNA"/>
</dbReference>
<dbReference type="RefSeq" id="WP_005811066.1">
    <property type="nucleotide sequence ID" value="NC_007907.1"/>
</dbReference>
<dbReference type="SMR" id="Q24V65"/>
<dbReference type="STRING" id="138119.DSY2288"/>
<dbReference type="KEGG" id="dsy:DSY2288"/>
<dbReference type="eggNOG" id="COG1354">
    <property type="taxonomic scope" value="Bacteria"/>
</dbReference>
<dbReference type="HOGENOM" id="CLU_038686_3_0_9"/>
<dbReference type="Proteomes" id="UP000001946">
    <property type="component" value="Chromosome"/>
</dbReference>
<dbReference type="GO" id="GO:0005737">
    <property type="term" value="C:cytoplasm"/>
    <property type="evidence" value="ECO:0007669"/>
    <property type="project" value="UniProtKB-SubCell"/>
</dbReference>
<dbReference type="GO" id="GO:0051301">
    <property type="term" value="P:cell division"/>
    <property type="evidence" value="ECO:0007669"/>
    <property type="project" value="UniProtKB-KW"/>
</dbReference>
<dbReference type="GO" id="GO:0007059">
    <property type="term" value="P:chromosome segregation"/>
    <property type="evidence" value="ECO:0007669"/>
    <property type="project" value="UniProtKB-UniRule"/>
</dbReference>
<dbReference type="GO" id="GO:0006260">
    <property type="term" value="P:DNA replication"/>
    <property type="evidence" value="ECO:0007669"/>
    <property type="project" value="UniProtKB-UniRule"/>
</dbReference>
<dbReference type="Gene3D" id="6.10.250.2410">
    <property type="match status" value="1"/>
</dbReference>
<dbReference type="Gene3D" id="1.10.10.580">
    <property type="entry name" value="Structural maintenance of chromosome 1. Chain E"/>
    <property type="match status" value="1"/>
</dbReference>
<dbReference type="HAMAP" id="MF_01805">
    <property type="entry name" value="ScpA"/>
    <property type="match status" value="1"/>
</dbReference>
<dbReference type="InterPro" id="IPR003768">
    <property type="entry name" value="ScpA"/>
</dbReference>
<dbReference type="InterPro" id="IPR023093">
    <property type="entry name" value="ScpA-like_C"/>
</dbReference>
<dbReference type="PANTHER" id="PTHR33969">
    <property type="entry name" value="SEGREGATION AND CONDENSATION PROTEIN A"/>
    <property type="match status" value="1"/>
</dbReference>
<dbReference type="PANTHER" id="PTHR33969:SF2">
    <property type="entry name" value="SEGREGATION AND CONDENSATION PROTEIN A"/>
    <property type="match status" value="1"/>
</dbReference>
<dbReference type="Pfam" id="PF02616">
    <property type="entry name" value="SMC_ScpA"/>
    <property type="match status" value="1"/>
</dbReference>
<feature type="chain" id="PRO_1000187561" description="Segregation and condensation protein A">
    <location>
        <begin position="1"/>
        <end position="261"/>
    </location>
</feature>
<comment type="function">
    <text evidence="1">Participates in chromosomal partition during cell division. May act via the formation of a condensin-like complex containing Smc and ScpB that pull DNA away from mid-cell into both cell halves.</text>
</comment>
<comment type="subunit">
    <text evidence="1">Component of a cohesin-like complex composed of ScpA, ScpB and the Smc homodimer, in which ScpA and ScpB bind to the head domain of Smc. The presence of the three proteins is required for the association of the complex with DNA.</text>
</comment>
<comment type="subcellular location">
    <subcellularLocation>
        <location evidence="1">Cytoplasm</location>
    </subcellularLocation>
    <text evidence="1">Associated with two foci at the outer edges of the nucleoid region in young cells, and at four foci within both cell halves in older cells.</text>
</comment>
<comment type="similarity">
    <text evidence="1">Belongs to the ScpA family.</text>
</comment>
<keyword id="KW-0131">Cell cycle</keyword>
<keyword id="KW-0132">Cell division</keyword>
<keyword id="KW-0159">Chromosome partition</keyword>
<keyword id="KW-0963">Cytoplasm</keyword>
<keyword id="KW-1185">Reference proteome</keyword>
<accession>Q24V65</accession>
<sequence length="261" mass="29930">MSNGSSVSHSANTAPYVELPAFQGPMDLLLHLIQQEKVDIYDIPIARITDQFIQVVRQMEDLDMEVTTEFLVLAAQLLQIKSRYLLPKPVKDVTVEEEGDPRQELVERLLAYRAFKQAAETLGEIQISSGQRYFREVDVDGLRSQFTPADPLAGIHFEALWHAFQRIIERAEQGEEIRTVEPDEIPIEVMVNDVLRRVILHPRGLRFSQLIRGTKRMEIIVSFLALLELLKSGKVHCEQSSQNEEIFVFPTEKAWEFTEGE</sequence>
<gene>
    <name evidence="1" type="primary">scpA</name>
    <name type="ordered locus">DSY2288</name>
</gene>
<name>SCPA_DESHY</name>